<sequence>MKFLEKGVYKIFGAVILVSMIGALVAEPIALGDAGLYYQYYVGDIDTAQQCYLVAADSAITGAAISAALGPAGLASGVFTVVFSTTVLA</sequence>
<proteinExistence type="predicted"/>
<reference key="1">
    <citation type="journal article" date="1996" name="Science">
        <title>Complete genome sequence of the methanogenic archaeon, Methanococcus jannaschii.</title>
        <authorList>
            <person name="Bult C.J."/>
            <person name="White O."/>
            <person name="Olsen G.J."/>
            <person name="Zhou L."/>
            <person name="Fleischmann R.D."/>
            <person name="Sutton G.G."/>
            <person name="Blake J.A."/>
            <person name="FitzGerald L.M."/>
            <person name="Clayton R.A."/>
            <person name="Gocayne J.D."/>
            <person name="Kerlavage A.R."/>
            <person name="Dougherty B.A."/>
            <person name="Tomb J.-F."/>
            <person name="Adams M.D."/>
            <person name="Reich C.I."/>
            <person name="Overbeek R."/>
            <person name="Kirkness E.F."/>
            <person name="Weinstock K.G."/>
            <person name="Merrick J.M."/>
            <person name="Glodek A."/>
            <person name="Scott J.L."/>
            <person name="Geoghagen N.S.M."/>
            <person name="Weidman J.F."/>
            <person name="Fuhrmann J.L."/>
            <person name="Nguyen D."/>
            <person name="Utterback T.R."/>
            <person name="Kelley J.M."/>
            <person name="Peterson J.D."/>
            <person name="Sadow P.W."/>
            <person name="Hanna M.C."/>
            <person name="Cotton M.D."/>
            <person name="Roberts K.M."/>
            <person name="Hurst M.A."/>
            <person name="Kaine B.P."/>
            <person name="Borodovsky M."/>
            <person name="Klenk H.-P."/>
            <person name="Fraser C.M."/>
            <person name="Smith H.O."/>
            <person name="Woese C.R."/>
            <person name="Venter J.C."/>
        </authorList>
    </citation>
    <scope>NUCLEOTIDE SEQUENCE [LARGE SCALE GENOMIC DNA]</scope>
    <source>
        <strain>ATCC 43067 / DSM 2661 / JAL-1 / JCM 10045 / NBRC 100440</strain>
    </source>
</reference>
<dbReference type="EMBL" id="L77117">
    <property type="protein sequence ID" value="AAB98789.1"/>
    <property type="molecule type" value="Genomic_DNA"/>
</dbReference>
<dbReference type="PIR" id="H64398">
    <property type="entry name" value="H64398"/>
</dbReference>
<dbReference type="RefSeq" id="WP_010870299.1">
    <property type="nucleotide sequence ID" value="NC_000909.1"/>
</dbReference>
<dbReference type="STRING" id="243232.MJ_0792"/>
<dbReference type="PaxDb" id="243232-MJ_0792"/>
<dbReference type="EnsemblBacteria" id="AAB98789">
    <property type="protein sequence ID" value="AAB98789"/>
    <property type="gene ID" value="MJ_0792"/>
</dbReference>
<dbReference type="GeneID" id="1451671"/>
<dbReference type="KEGG" id="mja:MJ_0792"/>
<dbReference type="eggNOG" id="arCOG09673">
    <property type="taxonomic scope" value="Archaea"/>
</dbReference>
<dbReference type="HOGENOM" id="CLU_2447691_0_0_2"/>
<dbReference type="InParanoid" id="Q58202"/>
<dbReference type="OrthoDB" id="66137at2157"/>
<dbReference type="Proteomes" id="UP000000805">
    <property type="component" value="Chromosome"/>
</dbReference>
<dbReference type="GO" id="GO:0005886">
    <property type="term" value="C:plasma membrane"/>
    <property type="evidence" value="ECO:0007669"/>
    <property type="project" value="UniProtKB-SubCell"/>
</dbReference>
<name>Y792_METJA</name>
<feature type="chain" id="PRO_0000107042" description="Uncharacterized protein MJ0792">
    <location>
        <begin position="1"/>
        <end position="89"/>
    </location>
</feature>
<feature type="transmembrane region" description="Helical" evidence="1">
    <location>
        <begin position="11"/>
        <end position="31"/>
    </location>
</feature>
<feature type="transmembrane region" description="Helical" evidence="1">
    <location>
        <begin position="63"/>
        <end position="83"/>
    </location>
</feature>
<comment type="subcellular location">
    <subcellularLocation>
        <location evidence="2">Cell membrane</location>
        <topology evidence="2">Multi-pass membrane protein</topology>
    </subcellularLocation>
</comment>
<accession>Q58202</accession>
<evidence type="ECO:0000255" key="1"/>
<evidence type="ECO:0000305" key="2"/>
<organism>
    <name type="scientific">Methanocaldococcus jannaschii (strain ATCC 43067 / DSM 2661 / JAL-1 / JCM 10045 / NBRC 100440)</name>
    <name type="common">Methanococcus jannaschii</name>
    <dbReference type="NCBI Taxonomy" id="243232"/>
    <lineage>
        <taxon>Archaea</taxon>
        <taxon>Methanobacteriati</taxon>
        <taxon>Methanobacteriota</taxon>
        <taxon>Methanomada group</taxon>
        <taxon>Methanococci</taxon>
        <taxon>Methanococcales</taxon>
        <taxon>Methanocaldococcaceae</taxon>
        <taxon>Methanocaldococcus</taxon>
    </lineage>
</organism>
<protein>
    <recommendedName>
        <fullName>Uncharacterized protein MJ0792</fullName>
    </recommendedName>
</protein>
<keyword id="KW-1003">Cell membrane</keyword>
<keyword id="KW-0472">Membrane</keyword>
<keyword id="KW-1185">Reference proteome</keyword>
<keyword id="KW-0812">Transmembrane</keyword>
<keyword id="KW-1133">Transmembrane helix</keyword>
<gene>
    <name type="ordered locus">MJ0792</name>
</gene>